<protein>
    <recommendedName>
        <fullName evidence="2">tRNA (guanine-N(7)-)-methyltransferase</fullName>
        <ecNumber evidence="2">2.1.1.33</ecNumber>
    </recommendedName>
    <alternativeName>
        <fullName evidence="2">tRNA (guanine(46)-N(7))-methyltransferase</fullName>
    </alternativeName>
    <alternativeName>
        <fullName evidence="2">tRNA(m7G46)-methyltransferase</fullName>
    </alternativeName>
</protein>
<gene>
    <name evidence="2" type="primary">trmB</name>
    <name type="ordered locus">USA300HOU_1738</name>
</gene>
<feature type="chain" id="PRO_1000136365" description="tRNA (guanine-N(7)-)-methyltransferase">
    <location>
        <begin position="1"/>
        <end position="214"/>
    </location>
</feature>
<feature type="active site" evidence="1">
    <location>
        <position position="117"/>
    </location>
</feature>
<feature type="binding site" evidence="2">
    <location>
        <position position="43"/>
    </location>
    <ligand>
        <name>S-adenosyl-L-methionine</name>
        <dbReference type="ChEBI" id="CHEBI:59789"/>
    </ligand>
</feature>
<feature type="binding site" evidence="2">
    <location>
        <position position="68"/>
    </location>
    <ligand>
        <name>S-adenosyl-L-methionine</name>
        <dbReference type="ChEBI" id="CHEBI:59789"/>
    </ligand>
</feature>
<feature type="binding site" evidence="2">
    <location>
        <position position="95"/>
    </location>
    <ligand>
        <name>S-adenosyl-L-methionine</name>
        <dbReference type="ChEBI" id="CHEBI:59789"/>
    </ligand>
</feature>
<feature type="binding site" evidence="2">
    <location>
        <position position="117"/>
    </location>
    <ligand>
        <name>S-adenosyl-L-methionine</name>
        <dbReference type="ChEBI" id="CHEBI:59789"/>
    </ligand>
</feature>
<feature type="binding site" evidence="2">
    <location>
        <position position="121"/>
    </location>
    <ligand>
        <name>substrate</name>
    </ligand>
</feature>
<feature type="binding site" evidence="2">
    <location>
        <position position="153"/>
    </location>
    <ligand>
        <name>substrate</name>
    </ligand>
</feature>
<feature type="binding site" evidence="2">
    <location>
        <begin position="190"/>
        <end position="193"/>
    </location>
    <ligand>
        <name>substrate</name>
    </ligand>
</feature>
<sequence>MRVRYKPWAEDYLKDHPELVDMDGQHAGKMTEWFDKTQPIHIEIGSGMGQFITTLAAQNPHINYISMEREKSIVYKVLDKVKEMGLTNLKIICNDAIELNEYFKDGEVSRIYLNFSDPWPKNRHAKRRLTYHTFLALYQQILNDEGDLHFKTDNRGLFAYSLESMSQFGMYFTKINLNLHQEDDGSNILTEYEKKFSDKGSRIYRMEAKFHSQK</sequence>
<comment type="function">
    <text evidence="2">Catalyzes the formation of N(7)-methylguanine at position 46 (m7G46) in tRNA.</text>
</comment>
<comment type="catalytic activity">
    <reaction evidence="2">
        <text>guanosine(46) in tRNA + S-adenosyl-L-methionine = N(7)-methylguanosine(46) in tRNA + S-adenosyl-L-homocysteine</text>
        <dbReference type="Rhea" id="RHEA:42708"/>
        <dbReference type="Rhea" id="RHEA-COMP:10188"/>
        <dbReference type="Rhea" id="RHEA-COMP:10189"/>
        <dbReference type="ChEBI" id="CHEBI:57856"/>
        <dbReference type="ChEBI" id="CHEBI:59789"/>
        <dbReference type="ChEBI" id="CHEBI:74269"/>
        <dbReference type="ChEBI" id="CHEBI:74480"/>
        <dbReference type="EC" id="2.1.1.33"/>
    </reaction>
</comment>
<comment type="pathway">
    <text evidence="2">tRNA modification; N(7)-methylguanine-tRNA biosynthesis.</text>
</comment>
<comment type="similarity">
    <text evidence="2">Belongs to the class I-like SAM-binding methyltransferase superfamily. TrmB family.</text>
</comment>
<accession>A8Z4H5</accession>
<name>TRMB_STAAT</name>
<dbReference type="EC" id="2.1.1.33" evidence="2"/>
<dbReference type="EMBL" id="CP000730">
    <property type="protein sequence ID" value="ABX29745.1"/>
    <property type="molecule type" value="Genomic_DNA"/>
</dbReference>
<dbReference type="RefSeq" id="WP_001266157.1">
    <property type="nucleotide sequence ID" value="NC_010079.1"/>
</dbReference>
<dbReference type="SMR" id="A8Z4H5"/>
<dbReference type="KEGG" id="sax:USA300HOU_1738"/>
<dbReference type="HOGENOM" id="CLU_050910_2_1_9"/>
<dbReference type="UniPathway" id="UPA00989"/>
<dbReference type="GO" id="GO:0043527">
    <property type="term" value="C:tRNA methyltransferase complex"/>
    <property type="evidence" value="ECO:0007669"/>
    <property type="project" value="TreeGrafter"/>
</dbReference>
<dbReference type="GO" id="GO:0008176">
    <property type="term" value="F:tRNA (guanine(46)-N7)-methyltransferase activity"/>
    <property type="evidence" value="ECO:0007669"/>
    <property type="project" value="UniProtKB-UniRule"/>
</dbReference>
<dbReference type="CDD" id="cd02440">
    <property type="entry name" value="AdoMet_MTases"/>
    <property type="match status" value="1"/>
</dbReference>
<dbReference type="FunFam" id="3.40.50.150:FF:000035">
    <property type="entry name" value="tRNA (guanine-N(7)-)-methyltransferase"/>
    <property type="match status" value="1"/>
</dbReference>
<dbReference type="Gene3D" id="3.40.50.150">
    <property type="entry name" value="Vaccinia Virus protein VP39"/>
    <property type="match status" value="1"/>
</dbReference>
<dbReference type="HAMAP" id="MF_01057">
    <property type="entry name" value="tRNA_methyltr_TrmB"/>
    <property type="match status" value="1"/>
</dbReference>
<dbReference type="InterPro" id="IPR029063">
    <property type="entry name" value="SAM-dependent_MTases_sf"/>
</dbReference>
<dbReference type="InterPro" id="IPR003358">
    <property type="entry name" value="tRNA_(Gua-N-7)_MeTrfase_Trmb"/>
</dbReference>
<dbReference type="InterPro" id="IPR055361">
    <property type="entry name" value="tRNA_methyltr_TrmB_bact"/>
</dbReference>
<dbReference type="NCBIfam" id="NF001080">
    <property type="entry name" value="PRK00121.2-2"/>
    <property type="match status" value="1"/>
</dbReference>
<dbReference type="NCBIfam" id="TIGR00091">
    <property type="entry name" value="tRNA (guanosine(46)-N7)-methyltransferase TrmB"/>
    <property type="match status" value="1"/>
</dbReference>
<dbReference type="PANTHER" id="PTHR23417">
    <property type="entry name" value="3-DEOXY-D-MANNO-OCTULOSONIC-ACID TRANSFERASE/TRNA GUANINE-N 7 - -METHYLTRANSFERASE"/>
    <property type="match status" value="1"/>
</dbReference>
<dbReference type="PANTHER" id="PTHR23417:SF14">
    <property type="entry name" value="PENTACOTRIPEPTIDE-REPEAT REGION OF PRORP DOMAIN-CONTAINING PROTEIN"/>
    <property type="match status" value="1"/>
</dbReference>
<dbReference type="Pfam" id="PF02390">
    <property type="entry name" value="Methyltransf_4"/>
    <property type="match status" value="1"/>
</dbReference>
<dbReference type="SUPFAM" id="SSF53335">
    <property type="entry name" value="S-adenosyl-L-methionine-dependent methyltransferases"/>
    <property type="match status" value="1"/>
</dbReference>
<dbReference type="PROSITE" id="PS51625">
    <property type="entry name" value="SAM_MT_TRMB"/>
    <property type="match status" value="1"/>
</dbReference>
<proteinExistence type="inferred from homology"/>
<organism>
    <name type="scientific">Staphylococcus aureus (strain USA300 / TCH1516)</name>
    <dbReference type="NCBI Taxonomy" id="451516"/>
    <lineage>
        <taxon>Bacteria</taxon>
        <taxon>Bacillati</taxon>
        <taxon>Bacillota</taxon>
        <taxon>Bacilli</taxon>
        <taxon>Bacillales</taxon>
        <taxon>Staphylococcaceae</taxon>
        <taxon>Staphylococcus</taxon>
    </lineage>
</organism>
<reference key="1">
    <citation type="journal article" date="2007" name="BMC Microbiol.">
        <title>Subtle genetic changes enhance virulence of methicillin resistant and sensitive Staphylococcus aureus.</title>
        <authorList>
            <person name="Highlander S.K."/>
            <person name="Hulten K.G."/>
            <person name="Qin X."/>
            <person name="Jiang H."/>
            <person name="Yerrapragada S."/>
            <person name="Mason E.O. Jr."/>
            <person name="Shang Y."/>
            <person name="Williams T.M."/>
            <person name="Fortunov R.M."/>
            <person name="Liu Y."/>
            <person name="Igboeli O."/>
            <person name="Petrosino J."/>
            <person name="Tirumalai M."/>
            <person name="Uzman A."/>
            <person name="Fox G.E."/>
            <person name="Cardenas A.M."/>
            <person name="Muzny D.M."/>
            <person name="Hemphill L."/>
            <person name="Ding Y."/>
            <person name="Dugan S."/>
            <person name="Blyth P.R."/>
            <person name="Buhay C.J."/>
            <person name="Dinh H.H."/>
            <person name="Hawes A.C."/>
            <person name="Holder M."/>
            <person name="Kovar C.L."/>
            <person name="Lee S.L."/>
            <person name="Liu W."/>
            <person name="Nazareth L.V."/>
            <person name="Wang Q."/>
            <person name="Zhou J."/>
            <person name="Kaplan S.L."/>
            <person name="Weinstock G.M."/>
        </authorList>
    </citation>
    <scope>NUCLEOTIDE SEQUENCE [LARGE SCALE GENOMIC DNA]</scope>
    <source>
        <strain>USA300 / TCH1516</strain>
    </source>
</reference>
<evidence type="ECO:0000250" key="1"/>
<evidence type="ECO:0000255" key="2">
    <source>
        <dbReference type="HAMAP-Rule" id="MF_01057"/>
    </source>
</evidence>
<keyword id="KW-0489">Methyltransferase</keyword>
<keyword id="KW-0949">S-adenosyl-L-methionine</keyword>
<keyword id="KW-0808">Transferase</keyword>
<keyword id="KW-0819">tRNA processing</keyword>